<evidence type="ECO:0000250" key="1"/>
<evidence type="ECO:0000255" key="2"/>
<evidence type="ECO:0000255" key="3">
    <source>
        <dbReference type="PROSITE-ProRule" id="PRU00180"/>
    </source>
</evidence>
<evidence type="ECO:0000255" key="4">
    <source>
        <dbReference type="PROSITE-ProRule" id="PRU00191"/>
    </source>
</evidence>
<evidence type="ECO:0000256" key="5">
    <source>
        <dbReference type="SAM" id="MobiDB-lite"/>
    </source>
</evidence>
<evidence type="ECO:0000269" key="6">
    <source>
    </source>
</evidence>
<evidence type="ECO:0000269" key="7">
    <source>
    </source>
</evidence>
<evidence type="ECO:0000269" key="8">
    <source>
    </source>
</evidence>
<evidence type="ECO:0000269" key="9">
    <source>
    </source>
</evidence>
<evidence type="ECO:0000305" key="10"/>
<comment type="function">
    <text evidence="6 7 9">Histone H3-H4 chaperone that plays a role in maintenance of chromatin structure during RNA polymerase II transcription elongation. Promotes the activation of the myogenic gene program by entailing erasure of the repressive H3K27me3 epigenetic mark through stabilization of the chromatin interaction of the H3K27 demethylase KDM6A. Plays an important role during early patterning and somitogenesis of the embryo.</text>
</comment>
<comment type="subcellular location">
    <subcellularLocation>
        <location evidence="1">Nucleus</location>
    </subcellularLocation>
</comment>
<comment type="developmental stage">
    <text evidence="6">Expressed throughout the blastoderm early in development. Highly expressed in the developing brain at 24 hours post-fertilization (hpf), and at lower levels in the rest of the embryo.</text>
</comment>
<comment type="similarity">
    <text evidence="10">Belongs to the SPT6 family.</text>
</comment>
<comment type="sequence caution" evidence="10">
    <conflict type="miscellaneous discrepancy">
        <sequence resource="EMBL-CDS" id="AAH97046"/>
    </conflict>
    <text>Contaminating sequence. Potential poly-A sequence.</text>
</comment>
<accession>Q8UVK2</accession>
<accession>Q4V961</accession>
<accession>Q6P4U2</accession>
<protein>
    <recommendedName>
        <fullName>Transcription elongation factor SPT6</fullName>
    </recommendedName>
    <alternativeName>
        <fullName>Protein pandora</fullName>
    </alternativeName>
</protein>
<gene>
    <name type="primary">supt6h</name>
    <name type="synonym">pan</name>
    <name type="synonym">spt6</name>
</gene>
<proteinExistence type="evidence at protein level"/>
<keyword id="KW-0143">Chaperone</keyword>
<keyword id="KW-0175">Coiled coil</keyword>
<keyword id="KW-0539">Nucleus</keyword>
<keyword id="KW-0597">Phosphoprotein</keyword>
<keyword id="KW-1185">Reference proteome</keyword>
<keyword id="KW-0804">Transcription</keyword>
<sequence length="1726" mass="198167">MSDFIESEAEESEEEFEEKDLKPKKTQRFMEEDEEEEEENTEDQDEHGNLRGLIDDDDVEEEEEEERGEPPAGEDSDSGEEVRHRRRKRSFDDYLDDDDLDLIEENLGVKVKRRKKKYSRVKTMDDEGDDDDEKDLIADEIFTGDGDGEGEVEDGEAVDTLHPRDDEEEEDDEESDIDDFIVDDDGQPITKKKGKKFSGYTDAALQEAQEIFGGDFDFAEFDTEAYDHAEEEEEDQDDESWDRPKKQTKRRVSRRSIFEIYEPSELESSHMTDQDNEIRSTDMPERFQLRAIPVKPAEDDELEEEAEWIYRNAFSTPTISMQESTDYLDRGTTTNFSRKGPSTIAKIKEALNFMRNQHFEVPFIAFYRKEYVEPELNINDLWKVWQWDEKWTQLKTRKQNLTRLFQRMQSYQFEQISADPDKPLADSTRPLDTADMERLKDVQSIDELGDVYNHFLLYYGRDIPKMQNAAKGGKKKLKKIKEVSEEDGEEAEVEEEEEEEEQKGPDLKQASRRDMYSICQSAGLDGLAKKFGLTPEQFGENLRDSYQRHETEQFPAEPLELAKDYVCSQFNTPEAVLEGARYMVAMQIAREPLVRHVLRQTFQERAKINIKPTKKGKKDVDEAHFAYSFKYLKNKPVKELSGDQFLKMCLAEEEGLLAIDICIDLVGVKGYGDQTYFDEIKQFYYRDEFSHQVQEWNKQRTLAIERSLQQFLYPQMAKELKNKLIAEAKDNIVKSCCKKLYNWLKVAPYRPDQQVEEDDDLMDESQGKGIRVLGVAFASGRDTPVFCSLINGEGEVVDFLRLPYFLKRRNAWREDEREKKQQDVENLKKFLLSKKPHVVAVSGENRDAHMVMEDIKRTISELEQNSSLPVVGVELVDNELAVLYMNSKKSEADFRDYPPLLRQAVSVARKIQDPLVEFAQVCSTDDDILCLKLHPLQEHVVKEELLSALYCEFINRVNEVGVDVNRAIAHPYTQSLVQYICGLGPRKGSHLLKILKQNNTRLENRTQLVTMCHMGPKVFINCAGFIKIDTASLGDSTDSYIEVLDGSRVHPETYEWARKMAVDALEYDESAEDANPAGALEEILENPERLKDLDLDAFAEELERQGYGNKGITLYDIRAELSCRYKDLRAPYRPPNTEEVFNMLTKETPETFYIGKLITCVVTNIAHRRPQGESYDQAIRNDETGLWQCPFCQQDNFPELSEVWNHFDSGSCPGQAIGVRTRLDNAVMGFIPTKFLSDKVVKHPEERVKPGMTVHCRIMKIDIEKFNVDLTCRTSDLSDKNNEWKLPKDTYYDFDAETDDVKQEEEQKKKQQRTTYIKRVIAHPSFHNINFKQAEKMMESMDQGDVVIRPSSKGENHLTVTWKVADGIYQHVDVREEGKENAFSLGHTLWINTEEFEDLDEITARYVQPMAAFARDLLGHKYFHECNGGDRKKMEELLVRTKKEKPTFIPYYISACRDLPGKFLLGYQPRGKPRIEYVTITPDGFRYRSQIFPTVNGLFRWFKDHYQDPVPGVTPASSRTRTPASVNATPANINIADLTRAVNSLPRNMTSQMFNAIAAVTGQGQNPNTTPAQWASSQYGYSGGSSAGGGGGSSSAYHVFATPQQPMATPLMTPSYSYTTPGQQQAMTTPQYPSSTPQSSHGHHQHSSSTPSSSSSRVRTPQPKASSHTAVDWGKMAEQWLQEKEAERRKQKTPRMTPRPSPSPMIESTPMSIAGDATPLLDEMDR</sequence>
<dbReference type="EMBL" id="AF421378">
    <property type="protein sequence ID" value="AAL73392.1"/>
    <property type="molecule type" value="mRNA"/>
</dbReference>
<dbReference type="EMBL" id="BC063248">
    <property type="protein sequence ID" value="AAH63248.1"/>
    <property type="molecule type" value="mRNA"/>
</dbReference>
<dbReference type="EMBL" id="BC097046">
    <property type="protein sequence ID" value="AAH97046.1"/>
    <property type="status" value="ALT_SEQ"/>
    <property type="molecule type" value="mRNA"/>
</dbReference>
<dbReference type="RefSeq" id="NP_660094.1">
    <property type="nucleotide sequence ID" value="NM_145118.1"/>
</dbReference>
<dbReference type="SMR" id="Q8UVK2"/>
<dbReference type="FunCoup" id="Q8UVK2">
    <property type="interactions" value="2998"/>
</dbReference>
<dbReference type="STRING" id="7955.ENSDARP00000013353"/>
<dbReference type="iPTMnet" id="Q8UVK2"/>
<dbReference type="PaxDb" id="7955-ENSDARP00000013353"/>
<dbReference type="Ensembl" id="ENSDART00000028007">
    <property type="protein sequence ID" value="ENSDARP00000013353"/>
    <property type="gene ID" value="ENSDARG00000006524"/>
</dbReference>
<dbReference type="GeneID" id="337866"/>
<dbReference type="KEGG" id="dre:337866"/>
<dbReference type="AGR" id="ZFIN:ZDB-GENE-030131-7949"/>
<dbReference type="CTD" id="6830"/>
<dbReference type="ZFIN" id="ZDB-GENE-030131-7949">
    <property type="gene designation" value="supt6h"/>
</dbReference>
<dbReference type="eggNOG" id="KOG1856">
    <property type="taxonomic scope" value="Eukaryota"/>
</dbReference>
<dbReference type="HOGENOM" id="CLU_001680_4_0_1"/>
<dbReference type="InParanoid" id="Q8UVK2"/>
<dbReference type="OMA" id="GYFYLCF"/>
<dbReference type="OrthoDB" id="343921at2759"/>
<dbReference type="PhylomeDB" id="Q8UVK2"/>
<dbReference type="TreeFam" id="TF105956"/>
<dbReference type="PRO" id="PR:Q8UVK2"/>
<dbReference type="Proteomes" id="UP000000437">
    <property type="component" value="Chromosome 21"/>
</dbReference>
<dbReference type="Bgee" id="ENSDARG00000006524">
    <property type="expression patterns" value="Expressed in gastrula and 28 other cell types or tissues"/>
</dbReference>
<dbReference type="GO" id="GO:0008023">
    <property type="term" value="C:transcription elongation factor complex"/>
    <property type="evidence" value="ECO:0000318"/>
    <property type="project" value="GO_Central"/>
</dbReference>
<dbReference type="GO" id="GO:0003677">
    <property type="term" value="F:DNA binding"/>
    <property type="evidence" value="ECO:0007669"/>
    <property type="project" value="InterPro"/>
</dbReference>
<dbReference type="GO" id="GO:0042393">
    <property type="term" value="F:histone binding"/>
    <property type="evidence" value="ECO:0000250"/>
    <property type="project" value="UniProtKB"/>
</dbReference>
<dbReference type="GO" id="GO:0031491">
    <property type="term" value="F:nucleosome binding"/>
    <property type="evidence" value="ECO:0000318"/>
    <property type="project" value="GO_Central"/>
</dbReference>
<dbReference type="GO" id="GO:0035050">
    <property type="term" value="P:embryonic heart tube development"/>
    <property type="evidence" value="ECO:0000315"/>
    <property type="project" value="ZFIN"/>
</dbReference>
<dbReference type="GO" id="GO:0007507">
    <property type="term" value="P:heart development"/>
    <property type="evidence" value="ECO:0000315"/>
    <property type="project" value="ZFIN"/>
</dbReference>
<dbReference type="GO" id="GO:0034728">
    <property type="term" value="P:nucleosome organization"/>
    <property type="evidence" value="ECO:0000318"/>
    <property type="project" value="GO_Central"/>
</dbReference>
<dbReference type="GO" id="GO:0071599">
    <property type="term" value="P:otic vesicle development"/>
    <property type="evidence" value="ECO:0000315"/>
    <property type="project" value="ZFIN"/>
</dbReference>
<dbReference type="GO" id="GO:0001756">
    <property type="term" value="P:somitogenesis"/>
    <property type="evidence" value="ECO:0000315"/>
    <property type="project" value="ZFIN"/>
</dbReference>
<dbReference type="GO" id="GO:0006368">
    <property type="term" value="P:transcription elongation by RNA polymerase II"/>
    <property type="evidence" value="ECO:0000250"/>
    <property type="project" value="UniProtKB"/>
</dbReference>
<dbReference type="GO" id="GO:0140673">
    <property type="term" value="P:transcription elongation-coupled chromatin remodeling"/>
    <property type="evidence" value="ECO:0000315"/>
    <property type="project" value="UniProtKB"/>
</dbReference>
<dbReference type="CDD" id="cd09928">
    <property type="entry name" value="SH2_Cterm_SPT6_like"/>
    <property type="match status" value="1"/>
</dbReference>
<dbReference type="CDD" id="cd09918">
    <property type="entry name" value="SH2_Nterm_SPT6_like"/>
    <property type="match status" value="1"/>
</dbReference>
<dbReference type="FunFam" id="2.40.50.140:FF:000494">
    <property type="entry name" value="Suppressor of Ty 6 homolog"/>
    <property type="match status" value="1"/>
</dbReference>
<dbReference type="FunFam" id="1.10.150.850:FF:000004">
    <property type="entry name" value="Transcription elongation factor SPT6"/>
    <property type="match status" value="1"/>
</dbReference>
<dbReference type="FunFam" id="1.10.10.2740:FF:000001">
    <property type="entry name" value="Transcription elongation factor spt6"/>
    <property type="match status" value="1"/>
</dbReference>
<dbReference type="FunFam" id="1.10.10.650:FF:000002">
    <property type="entry name" value="Transcription elongation factor spt6"/>
    <property type="match status" value="1"/>
</dbReference>
<dbReference type="FunFam" id="1.10.3500.10:FF:000001">
    <property type="entry name" value="Transcription elongation factor spt6"/>
    <property type="match status" value="1"/>
</dbReference>
<dbReference type="FunFam" id="3.30.420.140:FF:000004">
    <property type="entry name" value="Transcription elongation factor spt6"/>
    <property type="match status" value="1"/>
</dbReference>
<dbReference type="FunFam" id="3.30.505.10:FF:000030">
    <property type="entry name" value="Transcription elongation factor spt6"/>
    <property type="match status" value="1"/>
</dbReference>
<dbReference type="FunFam" id="3.30.505.10:FF:000032">
    <property type="entry name" value="Transcription elongation factor spt6"/>
    <property type="match status" value="1"/>
</dbReference>
<dbReference type="Gene3D" id="2.40.50.140">
    <property type="entry name" value="Nucleic acid-binding proteins"/>
    <property type="match status" value="1"/>
</dbReference>
<dbReference type="Gene3D" id="1.10.10.650">
    <property type="entry name" value="RuvA domain 2-like"/>
    <property type="match status" value="1"/>
</dbReference>
<dbReference type="Gene3D" id="3.30.505.10">
    <property type="entry name" value="SH2 domain"/>
    <property type="match status" value="2"/>
</dbReference>
<dbReference type="Gene3D" id="1.10.10.2740">
    <property type="entry name" value="Spt6, Death-like domain"/>
    <property type="match status" value="1"/>
</dbReference>
<dbReference type="Gene3D" id="1.10.150.850">
    <property type="entry name" value="Spt6, helix-hairpin-helix domain"/>
    <property type="match status" value="1"/>
</dbReference>
<dbReference type="Gene3D" id="1.10.3500.10">
    <property type="entry name" value="Tex N-terminal region-like"/>
    <property type="match status" value="1"/>
</dbReference>
<dbReference type="Gene3D" id="3.30.420.140">
    <property type="entry name" value="YqgF/RNase H-like domain"/>
    <property type="match status" value="1"/>
</dbReference>
<dbReference type="InterPro" id="IPR041692">
    <property type="entry name" value="HHH_9"/>
</dbReference>
<dbReference type="InterPro" id="IPR012340">
    <property type="entry name" value="NA-bd_OB-fold"/>
</dbReference>
<dbReference type="InterPro" id="IPR012337">
    <property type="entry name" value="RNaseH-like_sf"/>
</dbReference>
<dbReference type="InterPro" id="IPR010994">
    <property type="entry name" value="RuvA_2-like"/>
</dbReference>
<dbReference type="InterPro" id="IPR003029">
    <property type="entry name" value="S1_domain"/>
</dbReference>
<dbReference type="InterPro" id="IPR000980">
    <property type="entry name" value="SH2"/>
</dbReference>
<dbReference type="InterPro" id="IPR036860">
    <property type="entry name" value="SH2_dom_sf"/>
</dbReference>
<dbReference type="InterPro" id="IPR028083">
    <property type="entry name" value="Spt6_acidic_N_dom"/>
</dbReference>
<dbReference type="InterPro" id="IPR042066">
    <property type="entry name" value="Spt6_death-like"/>
</dbReference>
<dbReference type="InterPro" id="IPR032706">
    <property type="entry name" value="Spt6_HHH"/>
</dbReference>
<dbReference type="InterPro" id="IPR028088">
    <property type="entry name" value="Spt6_HTH_DNA-bd_dom"/>
</dbReference>
<dbReference type="InterPro" id="IPR035420">
    <property type="entry name" value="Spt6_SH2"/>
</dbReference>
<dbReference type="InterPro" id="IPR035018">
    <property type="entry name" value="Spt6_SH2_C"/>
</dbReference>
<dbReference type="InterPro" id="IPR035019">
    <property type="entry name" value="Spt6_SH2_N"/>
</dbReference>
<dbReference type="InterPro" id="IPR028231">
    <property type="entry name" value="Spt6_YqgF"/>
</dbReference>
<dbReference type="InterPro" id="IPR055179">
    <property type="entry name" value="Tex-like_central_region"/>
</dbReference>
<dbReference type="InterPro" id="IPR023323">
    <property type="entry name" value="Tex-like_dom_sf"/>
</dbReference>
<dbReference type="InterPro" id="IPR023319">
    <property type="entry name" value="Tex-like_HTH_dom_sf"/>
</dbReference>
<dbReference type="InterPro" id="IPR017072">
    <property type="entry name" value="TF_Spt6"/>
</dbReference>
<dbReference type="InterPro" id="IPR006641">
    <property type="entry name" value="YqgF/RNaseH-like_dom"/>
</dbReference>
<dbReference type="InterPro" id="IPR037027">
    <property type="entry name" value="YqgF/RNaseH-like_dom_sf"/>
</dbReference>
<dbReference type="PANTHER" id="PTHR10145">
    <property type="entry name" value="TRANSCRIPTION ELONGATION FACTOR SPT6"/>
    <property type="match status" value="1"/>
</dbReference>
<dbReference type="PANTHER" id="PTHR10145:SF6">
    <property type="entry name" value="TRANSCRIPTION ELONGATION FACTOR SPT6"/>
    <property type="match status" value="1"/>
</dbReference>
<dbReference type="Pfam" id="PF14635">
    <property type="entry name" value="HHH_7"/>
    <property type="match status" value="1"/>
</dbReference>
<dbReference type="Pfam" id="PF17674">
    <property type="entry name" value="HHH_9"/>
    <property type="match status" value="1"/>
</dbReference>
<dbReference type="Pfam" id="PF14641">
    <property type="entry name" value="HTH_44"/>
    <property type="match status" value="1"/>
</dbReference>
<dbReference type="Pfam" id="PF00575">
    <property type="entry name" value="S1"/>
    <property type="match status" value="1"/>
</dbReference>
<dbReference type="Pfam" id="PF14633">
    <property type="entry name" value="SH2_2"/>
    <property type="match status" value="1"/>
</dbReference>
<dbReference type="Pfam" id="PF14632">
    <property type="entry name" value="SPT6_acidic"/>
    <property type="match status" value="1"/>
</dbReference>
<dbReference type="Pfam" id="PF22706">
    <property type="entry name" value="Tex_central_region"/>
    <property type="match status" value="1"/>
</dbReference>
<dbReference type="Pfam" id="PF14639">
    <property type="entry name" value="YqgF"/>
    <property type="match status" value="1"/>
</dbReference>
<dbReference type="PIRSF" id="PIRSF036947">
    <property type="entry name" value="Spt6"/>
    <property type="match status" value="1"/>
</dbReference>
<dbReference type="SMART" id="SM00252">
    <property type="entry name" value="SH2"/>
    <property type="match status" value="1"/>
</dbReference>
<dbReference type="SMART" id="SM00732">
    <property type="entry name" value="YqgFc"/>
    <property type="match status" value="1"/>
</dbReference>
<dbReference type="SUPFAM" id="SSF50249">
    <property type="entry name" value="Nucleic acid-binding proteins"/>
    <property type="match status" value="1"/>
</dbReference>
<dbReference type="SUPFAM" id="SSF53098">
    <property type="entry name" value="Ribonuclease H-like"/>
    <property type="match status" value="1"/>
</dbReference>
<dbReference type="SUPFAM" id="SSF47781">
    <property type="entry name" value="RuvA domain 2-like"/>
    <property type="match status" value="2"/>
</dbReference>
<dbReference type="SUPFAM" id="SSF55550">
    <property type="entry name" value="SH2 domain"/>
    <property type="match status" value="1"/>
</dbReference>
<dbReference type="SUPFAM" id="SSF158832">
    <property type="entry name" value="Tex N-terminal region-like"/>
    <property type="match status" value="1"/>
</dbReference>
<dbReference type="PROSITE" id="PS50126">
    <property type="entry name" value="S1"/>
    <property type="match status" value="1"/>
</dbReference>
<dbReference type="PROSITE" id="PS50001">
    <property type="entry name" value="SH2"/>
    <property type="match status" value="1"/>
</dbReference>
<organism>
    <name type="scientific">Danio rerio</name>
    <name type="common">Zebrafish</name>
    <name type="synonym">Brachydanio rerio</name>
    <dbReference type="NCBI Taxonomy" id="7955"/>
    <lineage>
        <taxon>Eukaryota</taxon>
        <taxon>Metazoa</taxon>
        <taxon>Chordata</taxon>
        <taxon>Craniata</taxon>
        <taxon>Vertebrata</taxon>
        <taxon>Euteleostomi</taxon>
        <taxon>Actinopterygii</taxon>
        <taxon>Neopterygii</taxon>
        <taxon>Teleostei</taxon>
        <taxon>Ostariophysi</taxon>
        <taxon>Cypriniformes</taxon>
        <taxon>Danionidae</taxon>
        <taxon>Danioninae</taxon>
        <taxon>Danio</taxon>
    </lineage>
</organism>
<name>SPT6H_DANRE</name>
<reference key="1">
    <citation type="journal article" date="2002" name="Development">
        <title>The elongation factors Pandora/Spt6 and Foggy/Spt5 promote transcription in the zebrafish embryo.</title>
        <authorList>
            <person name="Keegan B.R."/>
            <person name="Feldman J.L."/>
            <person name="Lee D.H."/>
            <person name="Koos D.S."/>
            <person name="Ho R.K."/>
            <person name="Stainier D.Y.R."/>
            <person name="Yelon D."/>
        </authorList>
    </citation>
    <scope>NUCLEOTIDE SEQUENCE [MRNA]</scope>
    <scope>FUNCTION</scope>
    <scope>DEVELOPMENTAL STAGE</scope>
</reference>
<reference key="2">
    <citation type="submission" date="2005-06" db="EMBL/GenBank/DDBJ databases">
        <authorList>
            <consortium name="NIH - Zebrafish Gene Collection (ZGC) project"/>
        </authorList>
    </citation>
    <scope>NUCLEOTIDE SEQUENCE [LARGE SCALE MRNA]</scope>
    <source>
        <tissue>Embryo</tissue>
        <tissue>Larva</tissue>
    </source>
</reference>
<reference key="3">
    <citation type="journal article" date="2007" name="Dev. Biol.">
        <title>The role of the SPT6 chromatin remodeling factor in zebrafish embryogenesis.</title>
        <authorList>
            <person name="Kok F.O."/>
            <person name="Oster E."/>
            <person name="Mentzer L."/>
            <person name="Hsieh J.C."/>
            <person name="Henry C.A."/>
            <person name="Sirotkin H.I."/>
        </authorList>
    </citation>
    <scope>FUNCTION</scope>
</reference>
<reference key="4">
    <citation type="journal article" date="2008" name="J. Proteome Res.">
        <title>Online automated in vivo zebrafish phosphoproteomics: from large-scale analysis down to a single embryo.</title>
        <authorList>
            <person name="Lemeer S."/>
            <person name="Pinkse M.W.H."/>
            <person name="Mohammed S."/>
            <person name="van Breukelen B."/>
            <person name="den Hertog J."/>
            <person name="Slijper M."/>
            <person name="Heck A.J.R."/>
        </authorList>
    </citation>
    <scope>PHOSPHORYLATION [LARGE SCALE ANALYSIS] AT SER-90; THR-1522 AND SER-1525</scope>
    <scope>IDENTIFICATION BY MASS SPECTROMETRY</scope>
    <source>
        <tissue>Embryo</tissue>
    </source>
</reference>
<reference key="5">
    <citation type="journal article" date="2013" name="EMBO J.">
        <title>The histone chaperone Spt6 coordinates histone H3K27 demethylation and myogenesis.</title>
        <authorList>
            <person name="Wang A.H."/>
            <person name="Zare H."/>
            <person name="Mousavi K."/>
            <person name="Wang C."/>
            <person name="Moravec C.E."/>
            <person name="Sirotkin H.I."/>
            <person name="Ge K."/>
            <person name="Gutierrez-Cruz G."/>
            <person name="Sartorelli V."/>
        </authorList>
    </citation>
    <scope>FUNCTION</scope>
</reference>
<feature type="chain" id="PRO_0000072167" description="Transcription elongation factor SPT6">
    <location>
        <begin position="1"/>
        <end position="1726"/>
    </location>
</feature>
<feature type="domain" description="S1 motif" evidence="3">
    <location>
        <begin position="1204"/>
        <end position="1273"/>
    </location>
</feature>
<feature type="domain" description="SH2" evidence="4">
    <location>
        <begin position="1316"/>
        <end position="1426"/>
    </location>
</feature>
<feature type="region of interest" description="Disordered" evidence="5">
    <location>
        <begin position="1"/>
        <end position="196"/>
    </location>
</feature>
<feature type="region of interest" description="Disordered" evidence="5">
    <location>
        <begin position="219"/>
        <end position="248"/>
    </location>
</feature>
<feature type="region of interest" description="Disordered" evidence="5">
    <location>
        <begin position="482"/>
        <end position="512"/>
    </location>
</feature>
<feature type="region of interest" description="Disordered" evidence="5">
    <location>
        <begin position="1611"/>
        <end position="1726"/>
    </location>
</feature>
<feature type="coiled-coil region" evidence="2">
    <location>
        <begin position="806"/>
        <end position="865"/>
    </location>
</feature>
<feature type="compositionally biased region" description="Acidic residues" evidence="5">
    <location>
        <begin position="1"/>
        <end position="18"/>
    </location>
</feature>
<feature type="compositionally biased region" description="Acidic residues" evidence="5">
    <location>
        <begin position="31"/>
        <end position="45"/>
    </location>
</feature>
<feature type="compositionally biased region" description="Acidic residues" evidence="5">
    <location>
        <begin position="55"/>
        <end position="79"/>
    </location>
</feature>
<feature type="compositionally biased region" description="Acidic residues" evidence="5">
    <location>
        <begin position="93"/>
        <end position="104"/>
    </location>
</feature>
<feature type="compositionally biased region" description="Basic residues" evidence="5">
    <location>
        <begin position="110"/>
        <end position="120"/>
    </location>
</feature>
<feature type="compositionally biased region" description="Acidic residues" evidence="5">
    <location>
        <begin position="146"/>
        <end position="157"/>
    </location>
</feature>
<feature type="compositionally biased region" description="Acidic residues" evidence="5">
    <location>
        <begin position="166"/>
        <end position="186"/>
    </location>
</feature>
<feature type="compositionally biased region" description="Acidic residues" evidence="5">
    <location>
        <begin position="219"/>
        <end position="240"/>
    </location>
</feature>
<feature type="compositionally biased region" description="Acidic residues" evidence="5">
    <location>
        <begin position="484"/>
        <end position="501"/>
    </location>
</feature>
<feature type="compositionally biased region" description="Basic and acidic residues" evidence="5">
    <location>
        <begin position="502"/>
        <end position="512"/>
    </location>
</feature>
<feature type="compositionally biased region" description="Polar residues" evidence="5">
    <location>
        <begin position="1611"/>
        <end position="1627"/>
    </location>
</feature>
<feature type="compositionally biased region" description="Low complexity" evidence="5">
    <location>
        <begin position="1628"/>
        <end position="1640"/>
    </location>
</feature>
<feature type="compositionally biased region" description="Low complexity" evidence="5">
    <location>
        <begin position="1647"/>
        <end position="1656"/>
    </location>
</feature>
<feature type="compositionally biased region" description="Polar residues" evidence="5">
    <location>
        <begin position="1657"/>
        <end position="1669"/>
    </location>
</feature>
<feature type="modified residue" description="Phosphoserine" evidence="8">
    <location>
        <position position="90"/>
    </location>
</feature>
<feature type="modified residue" description="Phosphothreonine" evidence="8">
    <location>
        <position position="1522"/>
    </location>
</feature>
<feature type="modified residue" description="Phosphoserine" evidence="8">
    <location>
        <position position="1525"/>
    </location>
</feature>
<feature type="sequence conflict" description="In Ref. 2; AAH97046." evidence="10" ref="2">
    <original>E</original>
    <variation>G</variation>
    <location>
        <position position="8"/>
    </location>
</feature>
<feature type="sequence conflict" description="In Ref. 2; AAH97046." evidence="10" ref="2">
    <original>E</original>
    <variation>G</variation>
    <location>
        <position position="207"/>
    </location>
</feature>
<feature type="sequence conflict" description="In Ref. 2; AAH97046." evidence="10" ref="2">
    <original>D</original>
    <variation>G</variation>
    <location>
        <position position="242"/>
    </location>
</feature>
<feature type="sequence conflict" description="In Ref. 2; AAH63248." evidence="10" ref="2">
    <original>E</original>
    <variation>D</variation>
    <location>
        <position position="262"/>
    </location>
</feature>
<feature type="sequence conflict" description="In Ref. 2; AAH63248." evidence="10" ref="2">
    <original>P</original>
    <variation>L</variation>
    <location>
        <position position="1250"/>
    </location>
</feature>